<reference key="1">
    <citation type="journal article" date="1981" name="J. Biochem.">
        <title>Complete amino acid sequence of mouse liver metallothionein-II.</title>
        <authorList>
            <person name="Huang I.-Y."/>
            <person name="Kimura M."/>
            <person name="Hata A."/>
            <person name="Tsunoo H."/>
            <person name="Yoshida A."/>
        </authorList>
    </citation>
    <scope>PROTEIN SEQUENCE</scope>
    <scope>ACETYLATION AT MET-1</scope>
</reference>
<reference key="2">
    <citation type="journal article" date="1984" name="Mol. Cell. Biol.">
        <title>Regulation, linkage, and sequence of mouse metallothionein I and II genes.</title>
        <authorList>
            <person name="Searle P.F."/>
            <person name="Davison B.L."/>
            <person name="Stuart G.W."/>
            <person name="Wilkie T.M."/>
            <person name="Norstedt G."/>
            <person name="Palmiter R.D."/>
        </authorList>
    </citation>
    <scope>NUCLEOTIDE SEQUENCE [GENOMIC DNA]</scope>
</reference>
<reference key="3">
    <citation type="journal article" date="2005" name="Science">
        <title>The transcriptional landscape of the mammalian genome.</title>
        <authorList>
            <person name="Carninci P."/>
            <person name="Kasukawa T."/>
            <person name="Katayama S."/>
            <person name="Gough J."/>
            <person name="Frith M.C."/>
            <person name="Maeda N."/>
            <person name="Oyama R."/>
            <person name="Ravasi T."/>
            <person name="Lenhard B."/>
            <person name="Wells C."/>
            <person name="Kodzius R."/>
            <person name="Shimokawa K."/>
            <person name="Bajic V.B."/>
            <person name="Brenner S.E."/>
            <person name="Batalov S."/>
            <person name="Forrest A.R."/>
            <person name="Zavolan M."/>
            <person name="Davis M.J."/>
            <person name="Wilming L.G."/>
            <person name="Aidinis V."/>
            <person name="Allen J.E."/>
            <person name="Ambesi-Impiombato A."/>
            <person name="Apweiler R."/>
            <person name="Aturaliya R.N."/>
            <person name="Bailey T.L."/>
            <person name="Bansal M."/>
            <person name="Baxter L."/>
            <person name="Beisel K.W."/>
            <person name="Bersano T."/>
            <person name="Bono H."/>
            <person name="Chalk A.M."/>
            <person name="Chiu K.P."/>
            <person name="Choudhary V."/>
            <person name="Christoffels A."/>
            <person name="Clutterbuck D.R."/>
            <person name="Crowe M.L."/>
            <person name="Dalla E."/>
            <person name="Dalrymple B.P."/>
            <person name="de Bono B."/>
            <person name="Della Gatta G."/>
            <person name="di Bernardo D."/>
            <person name="Down T."/>
            <person name="Engstrom P."/>
            <person name="Fagiolini M."/>
            <person name="Faulkner G."/>
            <person name="Fletcher C.F."/>
            <person name="Fukushima T."/>
            <person name="Furuno M."/>
            <person name="Futaki S."/>
            <person name="Gariboldi M."/>
            <person name="Georgii-Hemming P."/>
            <person name="Gingeras T.R."/>
            <person name="Gojobori T."/>
            <person name="Green R.E."/>
            <person name="Gustincich S."/>
            <person name="Harbers M."/>
            <person name="Hayashi Y."/>
            <person name="Hensch T.K."/>
            <person name="Hirokawa N."/>
            <person name="Hill D."/>
            <person name="Huminiecki L."/>
            <person name="Iacono M."/>
            <person name="Ikeo K."/>
            <person name="Iwama A."/>
            <person name="Ishikawa T."/>
            <person name="Jakt M."/>
            <person name="Kanapin A."/>
            <person name="Katoh M."/>
            <person name="Kawasawa Y."/>
            <person name="Kelso J."/>
            <person name="Kitamura H."/>
            <person name="Kitano H."/>
            <person name="Kollias G."/>
            <person name="Krishnan S.P."/>
            <person name="Kruger A."/>
            <person name="Kummerfeld S.K."/>
            <person name="Kurochkin I.V."/>
            <person name="Lareau L.F."/>
            <person name="Lazarevic D."/>
            <person name="Lipovich L."/>
            <person name="Liu J."/>
            <person name="Liuni S."/>
            <person name="McWilliam S."/>
            <person name="Madan Babu M."/>
            <person name="Madera M."/>
            <person name="Marchionni L."/>
            <person name="Matsuda H."/>
            <person name="Matsuzawa S."/>
            <person name="Miki H."/>
            <person name="Mignone F."/>
            <person name="Miyake S."/>
            <person name="Morris K."/>
            <person name="Mottagui-Tabar S."/>
            <person name="Mulder N."/>
            <person name="Nakano N."/>
            <person name="Nakauchi H."/>
            <person name="Ng P."/>
            <person name="Nilsson R."/>
            <person name="Nishiguchi S."/>
            <person name="Nishikawa S."/>
            <person name="Nori F."/>
            <person name="Ohara O."/>
            <person name="Okazaki Y."/>
            <person name="Orlando V."/>
            <person name="Pang K.C."/>
            <person name="Pavan W.J."/>
            <person name="Pavesi G."/>
            <person name="Pesole G."/>
            <person name="Petrovsky N."/>
            <person name="Piazza S."/>
            <person name="Reed J."/>
            <person name="Reid J.F."/>
            <person name="Ring B.Z."/>
            <person name="Ringwald M."/>
            <person name="Rost B."/>
            <person name="Ruan Y."/>
            <person name="Salzberg S.L."/>
            <person name="Sandelin A."/>
            <person name="Schneider C."/>
            <person name="Schoenbach C."/>
            <person name="Sekiguchi K."/>
            <person name="Semple C.A."/>
            <person name="Seno S."/>
            <person name="Sessa L."/>
            <person name="Sheng Y."/>
            <person name="Shibata Y."/>
            <person name="Shimada H."/>
            <person name="Shimada K."/>
            <person name="Silva D."/>
            <person name="Sinclair B."/>
            <person name="Sperling S."/>
            <person name="Stupka E."/>
            <person name="Sugiura K."/>
            <person name="Sultana R."/>
            <person name="Takenaka Y."/>
            <person name="Taki K."/>
            <person name="Tammoja K."/>
            <person name="Tan S.L."/>
            <person name="Tang S."/>
            <person name="Taylor M.S."/>
            <person name="Tegner J."/>
            <person name="Teichmann S.A."/>
            <person name="Ueda H.R."/>
            <person name="van Nimwegen E."/>
            <person name="Verardo R."/>
            <person name="Wei C.L."/>
            <person name="Yagi K."/>
            <person name="Yamanishi H."/>
            <person name="Zabarovsky E."/>
            <person name="Zhu S."/>
            <person name="Zimmer A."/>
            <person name="Hide W."/>
            <person name="Bult C."/>
            <person name="Grimmond S.M."/>
            <person name="Teasdale R.D."/>
            <person name="Liu E.T."/>
            <person name="Brusic V."/>
            <person name="Quackenbush J."/>
            <person name="Wahlestedt C."/>
            <person name="Mattick J.S."/>
            <person name="Hume D.A."/>
            <person name="Kai C."/>
            <person name="Sasaki D."/>
            <person name="Tomaru Y."/>
            <person name="Fukuda S."/>
            <person name="Kanamori-Katayama M."/>
            <person name="Suzuki M."/>
            <person name="Aoki J."/>
            <person name="Arakawa T."/>
            <person name="Iida J."/>
            <person name="Imamura K."/>
            <person name="Itoh M."/>
            <person name="Kato T."/>
            <person name="Kawaji H."/>
            <person name="Kawagashira N."/>
            <person name="Kawashima T."/>
            <person name="Kojima M."/>
            <person name="Kondo S."/>
            <person name="Konno H."/>
            <person name="Nakano K."/>
            <person name="Ninomiya N."/>
            <person name="Nishio T."/>
            <person name="Okada M."/>
            <person name="Plessy C."/>
            <person name="Shibata K."/>
            <person name="Shiraki T."/>
            <person name="Suzuki S."/>
            <person name="Tagami M."/>
            <person name="Waki K."/>
            <person name="Watahiki A."/>
            <person name="Okamura-Oho Y."/>
            <person name="Suzuki H."/>
            <person name="Kawai J."/>
            <person name="Hayashizaki Y."/>
        </authorList>
    </citation>
    <scope>NUCLEOTIDE SEQUENCE [LARGE SCALE MRNA]</scope>
    <source>
        <strain>C57BL/6J</strain>
        <tissue>Kidney</tissue>
    </source>
</reference>
<reference key="4">
    <citation type="journal article" date="2004" name="Genome Res.">
        <title>The status, quality, and expansion of the NIH full-length cDNA project: the Mammalian Gene Collection (MGC).</title>
        <authorList>
            <consortium name="The MGC Project Team"/>
        </authorList>
    </citation>
    <scope>NUCLEOTIDE SEQUENCE [LARGE SCALE MRNA]</scope>
    <source>
        <strain>Czech II</strain>
        <tissue>Mammary gland</tissue>
    </source>
</reference>
<reference key="5">
    <citation type="journal article" date="2010" name="Cell">
        <title>A tissue-specific atlas of mouse protein phosphorylation and expression.</title>
        <authorList>
            <person name="Huttlin E.L."/>
            <person name="Jedrychowski M.P."/>
            <person name="Elias J.E."/>
            <person name="Goswami T."/>
            <person name="Rad R."/>
            <person name="Beausoleil S.A."/>
            <person name="Villen J."/>
            <person name="Haas W."/>
            <person name="Sowa M.E."/>
            <person name="Gygi S.P."/>
        </authorList>
    </citation>
    <scope>IDENTIFICATION BY MASS SPECTROMETRY [LARGE SCALE ANALYSIS]</scope>
    <source>
        <tissue>Spleen</tissue>
        <tissue>Testis</tissue>
    </source>
</reference>
<name>MT2_MOUSE</name>
<dbReference type="EMBL" id="K02236">
    <property type="protein sequence ID" value="AAA39528.1"/>
    <property type="molecule type" value="Genomic_DNA"/>
</dbReference>
<dbReference type="EMBL" id="AK002567">
    <property type="protein sequence ID" value="BAB22192.1"/>
    <property type="molecule type" value="mRNA"/>
</dbReference>
<dbReference type="EMBL" id="BC031758">
    <property type="protein sequence ID" value="AAH31758.1"/>
    <property type="molecule type" value="mRNA"/>
</dbReference>
<dbReference type="CCDS" id="CCDS40437.1"/>
<dbReference type="PIR" id="A03275">
    <property type="entry name" value="SMMS2"/>
</dbReference>
<dbReference type="PIR" id="I57572">
    <property type="entry name" value="I57572"/>
</dbReference>
<dbReference type="RefSeq" id="NP_032656.1">
    <property type="nucleotide sequence ID" value="NM_008630.2"/>
</dbReference>
<dbReference type="SMR" id="P02798"/>
<dbReference type="BioGRID" id="201580">
    <property type="interactions" value="4"/>
</dbReference>
<dbReference type="FunCoup" id="P02798">
    <property type="interactions" value="40"/>
</dbReference>
<dbReference type="STRING" id="10090.ENSMUSP00000034214"/>
<dbReference type="iPTMnet" id="P02798"/>
<dbReference type="PhosphoSitePlus" id="P02798"/>
<dbReference type="SwissPalm" id="P02798"/>
<dbReference type="jPOST" id="P02798"/>
<dbReference type="PaxDb" id="10090-ENSMUSP00000034214"/>
<dbReference type="PeptideAtlas" id="P02798"/>
<dbReference type="ProteomicsDB" id="291449"/>
<dbReference type="DNASU" id="17750"/>
<dbReference type="Ensembl" id="ENSMUST00000034214.8">
    <property type="protein sequence ID" value="ENSMUSP00000034214.7"/>
    <property type="gene ID" value="ENSMUSG00000031762.8"/>
</dbReference>
<dbReference type="GeneID" id="17750"/>
<dbReference type="KEGG" id="mmu:17750"/>
<dbReference type="UCSC" id="uc009mvv.1">
    <property type="organism name" value="mouse"/>
</dbReference>
<dbReference type="AGR" id="MGI:97172"/>
<dbReference type="CTD" id="17750"/>
<dbReference type="MGI" id="MGI:97172">
    <property type="gene designation" value="Mt2"/>
</dbReference>
<dbReference type="VEuPathDB" id="HostDB:ENSMUSG00000031762"/>
<dbReference type="eggNOG" id="KOG4738">
    <property type="taxonomic scope" value="Eukaryota"/>
</dbReference>
<dbReference type="HOGENOM" id="CLU_171204_2_0_1"/>
<dbReference type="InParanoid" id="P02798"/>
<dbReference type="OMA" id="KECKCSS"/>
<dbReference type="TreeFam" id="TF336054"/>
<dbReference type="Reactome" id="R-MMU-5661231">
    <property type="pathway name" value="Metallothioneins bind metals"/>
</dbReference>
<dbReference type="BioGRID-ORCS" id="17750">
    <property type="hits" value="2 hits in 75 CRISPR screens"/>
</dbReference>
<dbReference type="ChiTaRS" id="Mt2">
    <property type="organism name" value="mouse"/>
</dbReference>
<dbReference type="PRO" id="PR:P02798"/>
<dbReference type="Proteomes" id="UP000000589">
    <property type="component" value="Chromosome 8"/>
</dbReference>
<dbReference type="RNAct" id="P02798">
    <property type="molecule type" value="protein"/>
</dbReference>
<dbReference type="Bgee" id="ENSMUSG00000031762">
    <property type="expression patterns" value="Expressed in fetal liver hematopoietic progenitor cell and 256 other cell types or tissues"/>
</dbReference>
<dbReference type="ExpressionAtlas" id="P02798">
    <property type="expression patterns" value="baseline and differential"/>
</dbReference>
<dbReference type="GO" id="GO:0005737">
    <property type="term" value="C:cytoplasm"/>
    <property type="evidence" value="ECO:0000250"/>
    <property type="project" value="UniProtKB"/>
</dbReference>
<dbReference type="GO" id="GO:0005829">
    <property type="term" value="C:cytosol"/>
    <property type="evidence" value="ECO:0000304"/>
    <property type="project" value="Reactome"/>
</dbReference>
<dbReference type="GO" id="GO:0005634">
    <property type="term" value="C:nucleus"/>
    <property type="evidence" value="ECO:0000250"/>
    <property type="project" value="UniProtKB"/>
</dbReference>
<dbReference type="GO" id="GO:0008270">
    <property type="term" value="F:zinc ion binding"/>
    <property type="evidence" value="ECO:0000250"/>
    <property type="project" value="UniProtKB"/>
</dbReference>
<dbReference type="GO" id="GO:0071294">
    <property type="term" value="P:cellular response to zinc ion"/>
    <property type="evidence" value="ECO:0000250"/>
    <property type="project" value="UniProtKB"/>
</dbReference>
<dbReference type="GO" id="GO:0010273">
    <property type="term" value="P:detoxification of copper ion"/>
    <property type="evidence" value="ECO:0000315"/>
    <property type="project" value="MGI"/>
</dbReference>
<dbReference type="GO" id="GO:0006882">
    <property type="term" value="P:intracellular zinc ion homeostasis"/>
    <property type="evidence" value="ECO:0000315"/>
    <property type="project" value="MGI"/>
</dbReference>
<dbReference type="GO" id="GO:0045926">
    <property type="term" value="P:negative regulation of growth"/>
    <property type="evidence" value="ECO:0000250"/>
    <property type="project" value="UniProtKB"/>
</dbReference>
<dbReference type="GO" id="GO:0007263">
    <property type="term" value="P:nitric oxide mediated signal transduction"/>
    <property type="evidence" value="ECO:0000315"/>
    <property type="project" value="MGI"/>
</dbReference>
<dbReference type="GO" id="GO:0009617">
    <property type="term" value="P:response to bacterium"/>
    <property type="evidence" value="ECO:0000270"/>
    <property type="project" value="MGI"/>
</dbReference>
<dbReference type="FunFam" id="4.10.10.10:FF:000001">
    <property type="entry name" value="Metallothionein"/>
    <property type="match status" value="1"/>
</dbReference>
<dbReference type="Gene3D" id="4.10.10.10">
    <property type="entry name" value="Metallothionein Isoform II"/>
    <property type="match status" value="1"/>
</dbReference>
<dbReference type="InterPro" id="IPR017854">
    <property type="entry name" value="Metalthion_dom_sf"/>
</dbReference>
<dbReference type="InterPro" id="IPR023587">
    <property type="entry name" value="Metalthion_dom_sf_vert"/>
</dbReference>
<dbReference type="InterPro" id="IPR000006">
    <property type="entry name" value="Metalthion_vert"/>
</dbReference>
<dbReference type="InterPro" id="IPR018064">
    <property type="entry name" value="Metalthion_vert_metal_BS"/>
</dbReference>
<dbReference type="PANTHER" id="PTHR23299">
    <property type="entry name" value="METALLOTHIONEIN"/>
    <property type="match status" value="1"/>
</dbReference>
<dbReference type="PANTHER" id="PTHR23299:SF22">
    <property type="entry name" value="METALLOTHIONEIN-1G"/>
    <property type="match status" value="1"/>
</dbReference>
<dbReference type="Pfam" id="PF00131">
    <property type="entry name" value="Metallothio"/>
    <property type="match status" value="1"/>
</dbReference>
<dbReference type="PRINTS" id="PR00860">
    <property type="entry name" value="MTVERTEBRATE"/>
</dbReference>
<dbReference type="SUPFAM" id="SSF57868">
    <property type="entry name" value="Metallothionein"/>
    <property type="match status" value="1"/>
</dbReference>
<dbReference type="PROSITE" id="PS00203">
    <property type="entry name" value="METALLOTHIONEIN_VRT"/>
    <property type="match status" value="1"/>
</dbReference>
<evidence type="ECO:0000250" key="1">
    <source>
        <dbReference type="UniProtKB" id="P02795"/>
    </source>
</evidence>
<evidence type="ECO:0000269" key="2">
    <source>
    </source>
</evidence>
<evidence type="ECO:0000305" key="3"/>
<accession>P02798</accession>
<proteinExistence type="evidence at protein level"/>
<organism>
    <name type="scientific">Mus musculus</name>
    <name type="common">Mouse</name>
    <dbReference type="NCBI Taxonomy" id="10090"/>
    <lineage>
        <taxon>Eukaryota</taxon>
        <taxon>Metazoa</taxon>
        <taxon>Chordata</taxon>
        <taxon>Craniata</taxon>
        <taxon>Vertebrata</taxon>
        <taxon>Euteleostomi</taxon>
        <taxon>Mammalia</taxon>
        <taxon>Eutheria</taxon>
        <taxon>Euarchontoglires</taxon>
        <taxon>Glires</taxon>
        <taxon>Rodentia</taxon>
        <taxon>Myomorpha</taxon>
        <taxon>Muroidea</taxon>
        <taxon>Muridae</taxon>
        <taxon>Murinae</taxon>
        <taxon>Mus</taxon>
        <taxon>Mus</taxon>
    </lineage>
</organism>
<keyword id="KW-0007">Acetylation</keyword>
<keyword id="KW-0903">Direct protein sequencing</keyword>
<keyword id="KW-0479">Metal-binding</keyword>
<keyword id="KW-0480">Metal-thiolate cluster</keyword>
<keyword id="KW-0597">Phosphoprotein</keyword>
<keyword id="KW-1185">Reference proteome</keyword>
<protein>
    <recommendedName>
        <fullName>Metallothionein-2</fullName>
        <shortName>MT-2</shortName>
    </recommendedName>
    <alternativeName>
        <fullName>Metallothionein-II</fullName>
        <shortName>MT-II</shortName>
    </alternativeName>
</protein>
<feature type="chain" id="PRO_0000197207" description="Metallothionein-2">
    <location>
        <begin position="1"/>
        <end position="61"/>
    </location>
</feature>
<feature type="region of interest" description="Beta">
    <location>
        <begin position="1"/>
        <end position="29"/>
    </location>
</feature>
<feature type="region of interest" description="Alpha">
    <location>
        <begin position="30"/>
        <end position="61"/>
    </location>
</feature>
<feature type="binding site" evidence="1">
    <location>
        <position position="5"/>
    </location>
    <ligand>
        <name>a divalent metal cation</name>
        <dbReference type="ChEBI" id="CHEBI:60240"/>
        <label>1</label>
        <note>in cluster B</note>
    </ligand>
</feature>
<feature type="binding site" evidence="1">
    <location>
        <position position="7"/>
    </location>
    <ligand>
        <name>a divalent metal cation</name>
        <dbReference type="ChEBI" id="CHEBI:60240"/>
        <label>1</label>
        <note>in cluster B</note>
    </ligand>
</feature>
<feature type="binding site" evidence="1">
    <location>
        <position position="7"/>
    </location>
    <ligand>
        <name>a divalent metal cation</name>
        <dbReference type="ChEBI" id="CHEBI:60240"/>
        <label>2</label>
        <note>in cluster B</note>
    </ligand>
</feature>
<feature type="binding site" evidence="1">
    <location>
        <position position="13"/>
    </location>
    <ligand>
        <name>a divalent metal cation</name>
        <dbReference type="ChEBI" id="CHEBI:60240"/>
        <label>2</label>
        <note>in cluster B</note>
    </ligand>
</feature>
<feature type="binding site" evidence="1">
    <location>
        <position position="15"/>
    </location>
    <ligand>
        <name>a divalent metal cation</name>
        <dbReference type="ChEBI" id="CHEBI:60240"/>
        <label>2</label>
        <note>in cluster B</note>
    </ligand>
</feature>
<feature type="binding site" evidence="1">
    <location>
        <position position="15"/>
    </location>
    <ligand>
        <name>a divalent metal cation</name>
        <dbReference type="ChEBI" id="CHEBI:60240"/>
        <label>3</label>
        <note>in cluster B</note>
    </ligand>
</feature>
<feature type="binding site" evidence="1">
    <location>
        <position position="19"/>
    </location>
    <ligand>
        <name>a divalent metal cation</name>
        <dbReference type="ChEBI" id="CHEBI:60240"/>
        <label>3</label>
        <note>in cluster B</note>
    </ligand>
</feature>
<feature type="binding site" evidence="1">
    <location>
        <position position="21"/>
    </location>
    <ligand>
        <name>a divalent metal cation</name>
        <dbReference type="ChEBI" id="CHEBI:60240"/>
        <label>1</label>
        <note>in cluster B</note>
    </ligand>
</feature>
<feature type="binding site" evidence="1">
    <location>
        <position position="24"/>
    </location>
    <ligand>
        <name>a divalent metal cation</name>
        <dbReference type="ChEBI" id="CHEBI:60240"/>
        <label>1</label>
        <note>in cluster B</note>
    </ligand>
</feature>
<feature type="binding site" evidence="1">
    <location>
        <position position="24"/>
    </location>
    <ligand>
        <name>a divalent metal cation</name>
        <dbReference type="ChEBI" id="CHEBI:60240"/>
        <label>3</label>
        <note>in cluster B</note>
    </ligand>
</feature>
<feature type="binding site" evidence="1">
    <location>
        <position position="26"/>
    </location>
    <ligand>
        <name>a divalent metal cation</name>
        <dbReference type="ChEBI" id="CHEBI:60240"/>
        <label>2</label>
        <note>in cluster B</note>
    </ligand>
</feature>
<feature type="binding site" evidence="1">
    <location>
        <position position="29"/>
    </location>
    <ligand>
        <name>a divalent metal cation</name>
        <dbReference type="ChEBI" id="CHEBI:60240"/>
        <label>3</label>
        <note>in cluster B</note>
    </ligand>
</feature>
<feature type="binding site" evidence="1">
    <location>
        <position position="33"/>
    </location>
    <ligand>
        <name>a divalent metal cation</name>
        <dbReference type="ChEBI" id="CHEBI:60240"/>
        <label>4</label>
        <note>in cluster A</note>
    </ligand>
</feature>
<feature type="binding site" evidence="1">
    <location>
        <position position="34"/>
    </location>
    <ligand>
        <name>a divalent metal cation</name>
        <dbReference type="ChEBI" id="CHEBI:60240"/>
        <label>4</label>
        <note>in cluster A</note>
    </ligand>
</feature>
<feature type="binding site" evidence="1">
    <location>
        <position position="34"/>
    </location>
    <ligand>
        <name>a divalent metal cation</name>
        <dbReference type="ChEBI" id="CHEBI:60240"/>
        <label>5</label>
        <note>in cluster A</note>
    </ligand>
</feature>
<feature type="binding site" evidence="1">
    <location>
        <position position="36"/>
    </location>
    <ligand>
        <name>a divalent metal cation</name>
        <dbReference type="ChEBI" id="CHEBI:60240"/>
        <label>5</label>
        <note>in cluster A</note>
    </ligand>
</feature>
<feature type="binding site" evidence="1">
    <location>
        <position position="37"/>
    </location>
    <ligand>
        <name>a divalent metal cation</name>
        <dbReference type="ChEBI" id="CHEBI:60240"/>
        <label>5</label>
        <note>in cluster A</note>
    </ligand>
</feature>
<feature type="binding site" evidence="1">
    <location>
        <position position="37"/>
    </location>
    <ligand>
        <name>a divalent metal cation</name>
        <dbReference type="ChEBI" id="CHEBI:60240"/>
        <label>6</label>
        <note>in cluster A</note>
    </ligand>
</feature>
<feature type="binding site" evidence="1">
    <location>
        <position position="41"/>
    </location>
    <ligand>
        <name>a divalent metal cation</name>
        <dbReference type="ChEBI" id="CHEBI:60240"/>
        <label>6</label>
        <note>in cluster A</note>
    </ligand>
</feature>
<feature type="binding site" evidence="1">
    <location>
        <position position="44"/>
    </location>
    <ligand>
        <name>a divalent metal cation</name>
        <dbReference type="ChEBI" id="CHEBI:60240"/>
        <label>4</label>
        <note>in cluster A</note>
    </ligand>
</feature>
<feature type="binding site" evidence="1">
    <location>
        <position position="44"/>
    </location>
    <ligand>
        <name>a divalent metal cation</name>
        <dbReference type="ChEBI" id="CHEBI:60240"/>
        <label>6</label>
        <note>in cluster A</note>
    </ligand>
</feature>
<feature type="binding site" evidence="1">
    <location>
        <position position="48"/>
    </location>
    <ligand>
        <name>a divalent metal cation</name>
        <dbReference type="ChEBI" id="CHEBI:60240"/>
        <label>4</label>
        <note>in cluster A</note>
    </ligand>
</feature>
<feature type="binding site" evidence="1">
    <location>
        <position position="50"/>
    </location>
    <ligand>
        <name>a divalent metal cation</name>
        <dbReference type="ChEBI" id="CHEBI:60240"/>
        <label>5</label>
        <note>in cluster A</note>
    </ligand>
</feature>
<feature type="binding site" evidence="1">
    <location>
        <position position="50"/>
    </location>
    <ligand>
        <name>a divalent metal cation</name>
        <dbReference type="ChEBI" id="CHEBI:60240"/>
        <label>7</label>
        <note>in cluster A</note>
    </ligand>
</feature>
<feature type="binding site" evidence="1">
    <location>
        <position position="57"/>
    </location>
    <ligand>
        <name>a divalent metal cation</name>
        <dbReference type="ChEBI" id="CHEBI:60240"/>
        <label>7</label>
        <note>in cluster A</note>
    </ligand>
</feature>
<feature type="binding site" evidence="1">
    <location>
        <position position="59"/>
    </location>
    <ligand>
        <name>a divalent metal cation</name>
        <dbReference type="ChEBI" id="CHEBI:60240"/>
        <label>7</label>
        <note>in cluster A</note>
    </ligand>
</feature>
<feature type="binding site" evidence="1">
    <location>
        <position position="60"/>
    </location>
    <ligand>
        <name>a divalent metal cation</name>
        <dbReference type="ChEBI" id="CHEBI:60240"/>
        <label>6</label>
        <note>in cluster A</note>
    </ligand>
</feature>
<feature type="binding site" evidence="1">
    <location>
        <position position="60"/>
    </location>
    <ligand>
        <name>a divalent metal cation</name>
        <dbReference type="ChEBI" id="CHEBI:60240"/>
        <label>7</label>
        <note>in cluster A</note>
    </ligand>
</feature>
<feature type="modified residue" description="N-acetylmethionine" evidence="2">
    <location>
        <position position="1"/>
    </location>
</feature>
<feature type="modified residue" description="Phosphoserine" evidence="1">
    <location>
        <position position="58"/>
    </location>
</feature>
<feature type="sequence conflict" description="In Ref. 1; AA sequence." evidence="3" ref="1">
    <original>E</original>
    <variation>Q</variation>
    <location>
        <position position="52"/>
    </location>
</feature>
<sequence length="61" mass="6115">MDPNCSCASDGSCSCAGACKCKQCKCTSCKKSCCSCCPVGCAKCSQGCICKEASDKCSCCA</sequence>
<gene>
    <name type="primary">Mt2</name>
</gene>
<comment type="function">
    <text>Metallothioneins have a high content of cysteine residues that bind various heavy metals; these proteins are transcriptionally regulated by both heavy metals and glucocorticoids.</text>
</comment>
<comment type="domain">
    <text>Class I metallothioneins contain 2 metal-binding domains: four divalent ions are chelated within cluster A of the alpha domain and are coordinated via cysteinyl thiolate bridges to 11 cysteine ligands. Cluster B, the corresponding region within the beta domain, can ligate three divalent ions to 9 cysteines.</text>
</comment>
<comment type="similarity">
    <text evidence="3">Belongs to the metallothionein superfamily. Type 1 family.</text>
</comment>